<accession>A9VI78</accession>
<evidence type="ECO:0000255" key="1">
    <source>
        <dbReference type="HAMAP-Rule" id="MF_02104"/>
    </source>
</evidence>
<sequence>MMAIQNREEFLLQLSEKLGRKRPEAVEKPKWSFSPQWNVFDGLAQDELVLQLMEHCEVIHTEVKRTTKENLVETLGSLIKEWNIKSAMYSNDERFNEYGLTSCFNNEGTTHFRAWGLGDKEEDIKFAKAADLGITFSDMTLAESGTVVLFNDGLKGRHVSLLPESYIAIVPKSTIVPRLTQATKLIHNQSKAGENLPACVNFVSGPSNSADIEMNLVVGVHGPIRTAYIIVDDQ</sequence>
<feature type="chain" id="PRO_0000384008" description="Lactate utilization protein C 1">
    <location>
        <begin position="1"/>
        <end position="234"/>
    </location>
</feature>
<reference key="1">
    <citation type="journal article" date="2008" name="Chem. Biol. Interact.">
        <title>Extending the Bacillus cereus group genomics to putative food-borne pathogens of different toxicity.</title>
        <authorList>
            <person name="Lapidus A."/>
            <person name="Goltsman E."/>
            <person name="Auger S."/>
            <person name="Galleron N."/>
            <person name="Segurens B."/>
            <person name="Dossat C."/>
            <person name="Land M.L."/>
            <person name="Broussolle V."/>
            <person name="Brillard J."/>
            <person name="Guinebretiere M.-H."/>
            <person name="Sanchis V."/>
            <person name="Nguen-the C."/>
            <person name="Lereclus D."/>
            <person name="Richardson P."/>
            <person name="Wincker P."/>
            <person name="Weissenbach J."/>
            <person name="Ehrlich S.D."/>
            <person name="Sorokin A."/>
        </authorList>
    </citation>
    <scope>NUCLEOTIDE SEQUENCE [LARGE SCALE GENOMIC DNA]</scope>
    <source>
        <strain>KBAB4</strain>
    </source>
</reference>
<organism>
    <name type="scientific">Bacillus mycoides (strain KBAB4)</name>
    <name type="common">Bacillus weihenstephanensis</name>
    <dbReference type="NCBI Taxonomy" id="315730"/>
    <lineage>
        <taxon>Bacteria</taxon>
        <taxon>Bacillati</taxon>
        <taxon>Bacillota</taxon>
        <taxon>Bacilli</taxon>
        <taxon>Bacillales</taxon>
        <taxon>Bacillaceae</taxon>
        <taxon>Bacillus</taxon>
        <taxon>Bacillus cereus group</taxon>
    </lineage>
</organism>
<name>LUTC1_BACMK</name>
<gene>
    <name evidence="1" type="primary">lutC1</name>
    <name type="ordered locus">BcerKBAB4_0969</name>
</gene>
<protein>
    <recommendedName>
        <fullName evidence="1">Lactate utilization protein C 1</fullName>
    </recommendedName>
</protein>
<comment type="function">
    <text evidence="1">Is involved in L-lactate degradation and allows cells to grow with lactate as the sole carbon source.</text>
</comment>
<comment type="similarity">
    <text evidence="1">Belongs to the LutC/YkgG family.</text>
</comment>
<dbReference type="EMBL" id="CP000903">
    <property type="protein sequence ID" value="ABY42221.1"/>
    <property type="molecule type" value="Genomic_DNA"/>
</dbReference>
<dbReference type="SMR" id="A9VI78"/>
<dbReference type="KEGG" id="bwe:BcerKBAB4_0969"/>
<dbReference type="eggNOG" id="COG1556">
    <property type="taxonomic scope" value="Bacteria"/>
</dbReference>
<dbReference type="HOGENOM" id="CLU_090664_1_0_9"/>
<dbReference type="Proteomes" id="UP000002154">
    <property type="component" value="Chromosome"/>
</dbReference>
<dbReference type="GO" id="GO:0006089">
    <property type="term" value="P:lactate metabolic process"/>
    <property type="evidence" value="ECO:0007669"/>
    <property type="project" value="UniProtKB-UniRule"/>
</dbReference>
<dbReference type="Gene3D" id="3.40.50.10420">
    <property type="entry name" value="NagB/RpiA/CoA transferase-like"/>
    <property type="match status" value="1"/>
</dbReference>
<dbReference type="HAMAP" id="MF_02104">
    <property type="entry name" value="LutC"/>
    <property type="match status" value="1"/>
</dbReference>
<dbReference type="InterPro" id="IPR024185">
    <property type="entry name" value="FTHF_cligase-like_sf"/>
</dbReference>
<dbReference type="InterPro" id="IPR003741">
    <property type="entry name" value="LUD_dom"/>
</dbReference>
<dbReference type="InterPro" id="IPR022823">
    <property type="entry name" value="LutC"/>
</dbReference>
<dbReference type="InterPro" id="IPR037171">
    <property type="entry name" value="NagB/RpiA_transferase-like"/>
</dbReference>
<dbReference type="PANTHER" id="PTHR43682">
    <property type="entry name" value="LACTATE UTILIZATION PROTEIN C"/>
    <property type="match status" value="1"/>
</dbReference>
<dbReference type="PANTHER" id="PTHR43682:SF1">
    <property type="entry name" value="LACTATE UTILIZATION PROTEIN C"/>
    <property type="match status" value="1"/>
</dbReference>
<dbReference type="Pfam" id="PF02589">
    <property type="entry name" value="LUD_dom"/>
    <property type="match status" value="1"/>
</dbReference>
<dbReference type="SUPFAM" id="SSF100950">
    <property type="entry name" value="NagB/RpiA/CoA transferase-like"/>
    <property type="match status" value="1"/>
</dbReference>
<proteinExistence type="inferred from homology"/>